<dbReference type="EC" id="2.7.1.148" evidence="1"/>
<dbReference type="EMBL" id="CP000539">
    <property type="protein sequence ID" value="ABM41138.1"/>
    <property type="molecule type" value="Genomic_DNA"/>
</dbReference>
<dbReference type="SMR" id="A1W4G3"/>
<dbReference type="STRING" id="232721.Ajs_0896"/>
<dbReference type="KEGG" id="ajs:Ajs_0896"/>
<dbReference type="eggNOG" id="COG1947">
    <property type="taxonomic scope" value="Bacteria"/>
</dbReference>
<dbReference type="HOGENOM" id="CLU_053057_3_0_4"/>
<dbReference type="UniPathway" id="UPA00056">
    <property type="reaction ID" value="UER00094"/>
</dbReference>
<dbReference type="Proteomes" id="UP000000645">
    <property type="component" value="Chromosome"/>
</dbReference>
<dbReference type="GO" id="GO:0050515">
    <property type="term" value="F:4-(cytidine 5'-diphospho)-2-C-methyl-D-erythritol kinase activity"/>
    <property type="evidence" value="ECO:0007669"/>
    <property type="project" value="UniProtKB-UniRule"/>
</dbReference>
<dbReference type="GO" id="GO:0005524">
    <property type="term" value="F:ATP binding"/>
    <property type="evidence" value="ECO:0007669"/>
    <property type="project" value="UniProtKB-UniRule"/>
</dbReference>
<dbReference type="GO" id="GO:0019288">
    <property type="term" value="P:isopentenyl diphosphate biosynthetic process, methylerythritol 4-phosphate pathway"/>
    <property type="evidence" value="ECO:0007669"/>
    <property type="project" value="UniProtKB-UniRule"/>
</dbReference>
<dbReference type="GO" id="GO:0016114">
    <property type="term" value="P:terpenoid biosynthetic process"/>
    <property type="evidence" value="ECO:0007669"/>
    <property type="project" value="InterPro"/>
</dbReference>
<dbReference type="Gene3D" id="3.30.230.10">
    <property type="match status" value="1"/>
</dbReference>
<dbReference type="Gene3D" id="3.30.70.890">
    <property type="entry name" value="GHMP kinase, C-terminal domain"/>
    <property type="match status" value="1"/>
</dbReference>
<dbReference type="HAMAP" id="MF_00061">
    <property type="entry name" value="IspE"/>
    <property type="match status" value="1"/>
</dbReference>
<dbReference type="InterPro" id="IPR013750">
    <property type="entry name" value="GHMP_kinase_C_dom"/>
</dbReference>
<dbReference type="InterPro" id="IPR036554">
    <property type="entry name" value="GHMP_kinase_C_sf"/>
</dbReference>
<dbReference type="InterPro" id="IPR006204">
    <property type="entry name" value="GHMP_kinase_N_dom"/>
</dbReference>
<dbReference type="InterPro" id="IPR004424">
    <property type="entry name" value="IspE"/>
</dbReference>
<dbReference type="InterPro" id="IPR020568">
    <property type="entry name" value="Ribosomal_Su5_D2-typ_SF"/>
</dbReference>
<dbReference type="InterPro" id="IPR014721">
    <property type="entry name" value="Ribsml_uS5_D2-typ_fold_subgr"/>
</dbReference>
<dbReference type="NCBIfam" id="TIGR00154">
    <property type="entry name" value="ispE"/>
    <property type="match status" value="1"/>
</dbReference>
<dbReference type="PANTHER" id="PTHR43527">
    <property type="entry name" value="4-DIPHOSPHOCYTIDYL-2-C-METHYL-D-ERYTHRITOL KINASE, CHLOROPLASTIC"/>
    <property type="match status" value="1"/>
</dbReference>
<dbReference type="PANTHER" id="PTHR43527:SF2">
    <property type="entry name" value="4-DIPHOSPHOCYTIDYL-2-C-METHYL-D-ERYTHRITOL KINASE, CHLOROPLASTIC"/>
    <property type="match status" value="1"/>
</dbReference>
<dbReference type="Pfam" id="PF08544">
    <property type="entry name" value="GHMP_kinases_C"/>
    <property type="match status" value="1"/>
</dbReference>
<dbReference type="Pfam" id="PF00288">
    <property type="entry name" value="GHMP_kinases_N"/>
    <property type="match status" value="1"/>
</dbReference>
<dbReference type="PIRSF" id="PIRSF010376">
    <property type="entry name" value="IspE"/>
    <property type="match status" value="1"/>
</dbReference>
<dbReference type="SUPFAM" id="SSF55060">
    <property type="entry name" value="GHMP Kinase, C-terminal domain"/>
    <property type="match status" value="1"/>
</dbReference>
<dbReference type="SUPFAM" id="SSF54211">
    <property type="entry name" value="Ribosomal protein S5 domain 2-like"/>
    <property type="match status" value="1"/>
</dbReference>
<reference key="1">
    <citation type="submission" date="2006-12" db="EMBL/GenBank/DDBJ databases">
        <title>Complete sequence of chromosome 1 of Acidovorax sp. JS42.</title>
        <authorList>
            <person name="Copeland A."/>
            <person name="Lucas S."/>
            <person name="Lapidus A."/>
            <person name="Barry K."/>
            <person name="Detter J.C."/>
            <person name="Glavina del Rio T."/>
            <person name="Dalin E."/>
            <person name="Tice H."/>
            <person name="Pitluck S."/>
            <person name="Chertkov O."/>
            <person name="Brettin T."/>
            <person name="Bruce D."/>
            <person name="Han C."/>
            <person name="Tapia R."/>
            <person name="Gilna P."/>
            <person name="Schmutz J."/>
            <person name="Larimer F."/>
            <person name="Land M."/>
            <person name="Hauser L."/>
            <person name="Kyrpides N."/>
            <person name="Kim E."/>
            <person name="Stahl D."/>
            <person name="Richardson P."/>
        </authorList>
    </citation>
    <scope>NUCLEOTIDE SEQUENCE [LARGE SCALE GENOMIC DNA]</scope>
    <source>
        <strain>JS42</strain>
    </source>
</reference>
<accession>A1W4G3</accession>
<comment type="function">
    <text evidence="1">Catalyzes the phosphorylation of the position 2 hydroxy group of 4-diphosphocytidyl-2C-methyl-D-erythritol.</text>
</comment>
<comment type="catalytic activity">
    <reaction evidence="1">
        <text>4-CDP-2-C-methyl-D-erythritol + ATP = 4-CDP-2-C-methyl-D-erythritol 2-phosphate + ADP + H(+)</text>
        <dbReference type="Rhea" id="RHEA:18437"/>
        <dbReference type="ChEBI" id="CHEBI:15378"/>
        <dbReference type="ChEBI" id="CHEBI:30616"/>
        <dbReference type="ChEBI" id="CHEBI:57823"/>
        <dbReference type="ChEBI" id="CHEBI:57919"/>
        <dbReference type="ChEBI" id="CHEBI:456216"/>
        <dbReference type="EC" id="2.7.1.148"/>
    </reaction>
</comment>
<comment type="pathway">
    <text evidence="1">Isoprenoid biosynthesis; isopentenyl diphosphate biosynthesis via DXP pathway; isopentenyl diphosphate from 1-deoxy-D-xylulose 5-phosphate: step 3/6.</text>
</comment>
<comment type="similarity">
    <text evidence="1">Belongs to the GHMP kinase family. IspE subfamily.</text>
</comment>
<name>ISPE_ACISJ</name>
<evidence type="ECO:0000255" key="1">
    <source>
        <dbReference type="HAMAP-Rule" id="MF_00061"/>
    </source>
</evidence>
<sequence>MQALYDVPAPAKLNLFLHVTGRRPDGYHLLQSVFMLIDWCDVLHFEVGGNGAVTREDLTSALPADDLVVRAARALQKATGCPQGVHIGVSKHIPAQAGLGGGSSDAASTLLALNRLWKLKLSRQQLHSIALTLGADVPFFLCGASAWVEGIGDIIRPLELEHQLPPAAFAVVKPEAGLDTRMIFSHPSLKRDSSCATISGFAATHYQFGSNDLQPVAQALCPEITQAINWLESKGLQGRMTGSGSAVFAQITHAVDLHDAPAAWHVKVCENLKSHPLADWVFG</sequence>
<keyword id="KW-0067">ATP-binding</keyword>
<keyword id="KW-0414">Isoprene biosynthesis</keyword>
<keyword id="KW-0418">Kinase</keyword>
<keyword id="KW-0547">Nucleotide-binding</keyword>
<keyword id="KW-0808">Transferase</keyword>
<gene>
    <name evidence="1" type="primary">ispE</name>
    <name type="ordered locus">Ajs_0896</name>
</gene>
<organism>
    <name type="scientific">Acidovorax sp. (strain JS42)</name>
    <dbReference type="NCBI Taxonomy" id="232721"/>
    <lineage>
        <taxon>Bacteria</taxon>
        <taxon>Pseudomonadati</taxon>
        <taxon>Pseudomonadota</taxon>
        <taxon>Betaproteobacteria</taxon>
        <taxon>Burkholderiales</taxon>
        <taxon>Comamonadaceae</taxon>
        <taxon>Acidovorax</taxon>
    </lineage>
</organism>
<protein>
    <recommendedName>
        <fullName evidence="1">4-diphosphocytidyl-2-C-methyl-D-erythritol kinase</fullName>
        <shortName evidence="1">CMK</shortName>
        <ecNumber evidence="1">2.7.1.148</ecNumber>
    </recommendedName>
    <alternativeName>
        <fullName evidence="1">4-(cytidine-5'-diphospho)-2-C-methyl-D-erythritol kinase</fullName>
    </alternativeName>
</protein>
<feature type="chain" id="PRO_0000335692" description="4-diphosphocytidyl-2-C-methyl-D-erythritol kinase">
    <location>
        <begin position="1"/>
        <end position="283"/>
    </location>
</feature>
<feature type="active site" evidence="1">
    <location>
        <position position="12"/>
    </location>
</feature>
<feature type="active site" evidence="1">
    <location>
        <position position="136"/>
    </location>
</feature>
<feature type="binding site" evidence="1">
    <location>
        <begin position="94"/>
        <end position="104"/>
    </location>
    <ligand>
        <name>ATP</name>
        <dbReference type="ChEBI" id="CHEBI:30616"/>
    </ligand>
</feature>
<proteinExistence type="inferred from homology"/>